<accession>F4JJJ3</accession>
<accession>O65414</accession>
<name>NDB3_ARATH</name>
<organism>
    <name type="scientific">Arabidopsis thaliana</name>
    <name type="common">Mouse-ear cress</name>
    <dbReference type="NCBI Taxonomy" id="3702"/>
    <lineage>
        <taxon>Eukaryota</taxon>
        <taxon>Viridiplantae</taxon>
        <taxon>Streptophyta</taxon>
        <taxon>Embryophyta</taxon>
        <taxon>Tracheophyta</taxon>
        <taxon>Spermatophyta</taxon>
        <taxon>Magnoliopsida</taxon>
        <taxon>eudicotyledons</taxon>
        <taxon>Gunneridae</taxon>
        <taxon>Pentapetalae</taxon>
        <taxon>rosids</taxon>
        <taxon>malvids</taxon>
        <taxon>Brassicales</taxon>
        <taxon>Brassicaceae</taxon>
        <taxon>Camelineae</taxon>
        <taxon>Arabidopsis</taxon>
    </lineage>
</organism>
<feature type="transit peptide" description="Mitochondrion" evidence="2">
    <location>
        <begin position="1"/>
        <end position="38"/>
    </location>
</feature>
<feature type="chain" id="PRO_0000419507" description="External alternative NAD(P)H-ubiquinone oxidoreductase B3, mitochondrial">
    <location>
        <begin position="39"/>
        <end position="580"/>
    </location>
</feature>
<feature type="domain" description="EF-hand" evidence="3">
    <location>
        <begin position="377"/>
        <end position="412"/>
    </location>
</feature>
<feature type="short sequence motif" description="Microbody targeting signal" evidence="1">
    <location>
        <begin position="571"/>
        <end position="580"/>
    </location>
</feature>
<feature type="binding site" evidence="1">
    <location>
        <begin position="57"/>
        <end position="87"/>
    </location>
    <ligand>
        <name>FAD</name>
        <dbReference type="ChEBI" id="CHEBI:57692"/>
    </ligand>
</feature>
<feature type="binding site" evidence="1">
    <location>
        <begin position="221"/>
        <end position="257"/>
    </location>
    <ligand>
        <name>NAD(+)</name>
        <dbReference type="ChEBI" id="CHEBI:57540"/>
    </ligand>
</feature>
<feature type="binding site" evidence="7">
    <location>
        <position position="390"/>
    </location>
    <ligand>
        <name>Ca(2+)</name>
        <dbReference type="ChEBI" id="CHEBI:29108"/>
    </ligand>
</feature>
<feature type="binding site" evidence="7">
    <location>
        <position position="394"/>
    </location>
    <ligand>
        <name>Ca(2+)</name>
        <dbReference type="ChEBI" id="CHEBI:29108"/>
    </ligand>
</feature>
<feature type="binding site" evidence="7">
    <location>
        <position position="396"/>
    </location>
    <ligand>
        <name>Ca(2+)</name>
        <dbReference type="ChEBI" id="CHEBI:29108"/>
    </ligand>
</feature>
<feature type="binding site" evidence="7">
    <location>
        <position position="401"/>
    </location>
    <ligand>
        <name>Ca(2+)</name>
        <dbReference type="ChEBI" id="CHEBI:29108"/>
    </ligand>
</feature>
<proteinExistence type="evidence at transcript level"/>
<keyword id="KW-0106">Calcium</keyword>
<keyword id="KW-0274">FAD</keyword>
<keyword id="KW-0285">Flavoprotein</keyword>
<keyword id="KW-0472">Membrane</keyword>
<keyword id="KW-0479">Metal-binding</keyword>
<keyword id="KW-0496">Mitochondrion</keyword>
<keyword id="KW-0999">Mitochondrion inner membrane</keyword>
<keyword id="KW-0520">NAD</keyword>
<keyword id="KW-0521">NADP</keyword>
<keyword id="KW-0560">Oxidoreductase</keyword>
<keyword id="KW-0576">Peroxisome</keyword>
<keyword id="KW-1185">Reference proteome</keyword>
<keyword id="KW-0809">Transit peptide</keyword>
<dbReference type="EC" id="1.6.5.9"/>
<dbReference type="EMBL" id="AL022603">
    <property type="protein sequence ID" value="CAA18713.1"/>
    <property type="status" value="ALT_SEQ"/>
    <property type="molecule type" value="Genomic_DNA"/>
</dbReference>
<dbReference type="EMBL" id="AL161555">
    <property type="protein sequence ID" value="CAB81256.1"/>
    <property type="status" value="ALT_SEQ"/>
    <property type="molecule type" value="Genomic_DNA"/>
</dbReference>
<dbReference type="EMBL" id="CP002687">
    <property type="protein sequence ID" value="AEE84459.1"/>
    <property type="molecule type" value="Genomic_DNA"/>
</dbReference>
<dbReference type="PIR" id="T05157">
    <property type="entry name" value="T05157"/>
</dbReference>
<dbReference type="RefSeq" id="NP_193880.5">
    <property type="nucleotide sequence ID" value="NM_118269.6"/>
</dbReference>
<dbReference type="SMR" id="F4JJJ3"/>
<dbReference type="FunCoup" id="F4JJJ3">
    <property type="interactions" value="270"/>
</dbReference>
<dbReference type="STRING" id="3702.F4JJJ3"/>
<dbReference type="GlyGen" id="F4JJJ3">
    <property type="glycosylation" value="1 site"/>
</dbReference>
<dbReference type="iPTMnet" id="F4JJJ3"/>
<dbReference type="PaxDb" id="3702-AT4G21490.1"/>
<dbReference type="ProteomicsDB" id="251202"/>
<dbReference type="EnsemblPlants" id="AT4G21490.1">
    <property type="protein sequence ID" value="AT4G21490.1"/>
    <property type="gene ID" value="AT4G21490"/>
</dbReference>
<dbReference type="GeneID" id="828234"/>
<dbReference type="Gramene" id="AT4G21490.1">
    <property type="protein sequence ID" value="AT4G21490.1"/>
    <property type="gene ID" value="AT4G21490"/>
</dbReference>
<dbReference type="KEGG" id="ath:AT4G21490"/>
<dbReference type="Araport" id="AT4G21490"/>
<dbReference type="TAIR" id="AT4G21490">
    <property type="gene designation" value="NDB3"/>
</dbReference>
<dbReference type="eggNOG" id="KOG2495">
    <property type="taxonomic scope" value="Eukaryota"/>
</dbReference>
<dbReference type="HOGENOM" id="CLU_021377_1_0_1"/>
<dbReference type="InParanoid" id="F4JJJ3"/>
<dbReference type="OMA" id="EPIREIN"/>
<dbReference type="PRO" id="PR:F4JJJ3"/>
<dbReference type="Proteomes" id="UP000006548">
    <property type="component" value="Chromosome 4"/>
</dbReference>
<dbReference type="ExpressionAtlas" id="F4JJJ3">
    <property type="expression patterns" value="baseline and differential"/>
</dbReference>
<dbReference type="GO" id="GO:0005743">
    <property type="term" value="C:mitochondrial inner membrane"/>
    <property type="evidence" value="ECO:0007669"/>
    <property type="project" value="UniProtKB-SubCell"/>
</dbReference>
<dbReference type="GO" id="GO:0005758">
    <property type="term" value="C:mitochondrial intermembrane space"/>
    <property type="evidence" value="ECO:0000250"/>
    <property type="project" value="UniProtKB"/>
</dbReference>
<dbReference type="GO" id="GO:0005739">
    <property type="term" value="C:mitochondrion"/>
    <property type="evidence" value="ECO:0000314"/>
    <property type="project" value="UniProtKB"/>
</dbReference>
<dbReference type="GO" id="GO:0005777">
    <property type="term" value="C:peroxisome"/>
    <property type="evidence" value="ECO:0007669"/>
    <property type="project" value="UniProtKB-SubCell"/>
</dbReference>
<dbReference type="GO" id="GO:0005509">
    <property type="term" value="F:calcium ion binding"/>
    <property type="evidence" value="ECO:0007669"/>
    <property type="project" value="InterPro"/>
</dbReference>
<dbReference type="GO" id="GO:0050136">
    <property type="term" value="F:NADH:ubiquinone reductase (non-electrogenic) activity"/>
    <property type="evidence" value="ECO:0007669"/>
    <property type="project" value="UniProtKB-EC"/>
</dbReference>
<dbReference type="GO" id="GO:0016491">
    <property type="term" value="F:oxidoreductase activity"/>
    <property type="evidence" value="ECO:0000250"/>
    <property type="project" value="UniProtKB"/>
</dbReference>
<dbReference type="FunFam" id="3.50.50.100:FF:000002">
    <property type="entry name" value="External alternative NAD(P)H-ubiquinone oxidoreductase B1, mitochondrial"/>
    <property type="match status" value="1"/>
</dbReference>
<dbReference type="FunFam" id="3.50.50.100:FF:000008">
    <property type="entry name" value="External alternative NAD(P)H-ubiquinone oxidoreductase B1, mitochondrial"/>
    <property type="match status" value="1"/>
</dbReference>
<dbReference type="Gene3D" id="3.50.50.100">
    <property type="match status" value="2"/>
</dbReference>
<dbReference type="InterPro" id="IPR011992">
    <property type="entry name" value="EF-hand-dom_pair"/>
</dbReference>
<dbReference type="InterPro" id="IPR002048">
    <property type="entry name" value="EF_hand_dom"/>
</dbReference>
<dbReference type="InterPro" id="IPR036188">
    <property type="entry name" value="FAD/NAD-bd_sf"/>
</dbReference>
<dbReference type="InterPro" id="IPR023753">
    <property type="entry name" value="FAD/NAD-binding_dom"/>
</dbReference>
<dbReference type="InterPro" id="IPR045024">
    <property type="entry name" value="NDH-2"/>
</dbReference>
<dbReference type="InterPro" id="IPR054585">
    <property type="entry name" value="NDH2-like_C"/>
</dbReference>
<dbReference type="PANTHER" id="PTHR43706:SF47">
    <property type="entry name" value="EXTERNAL NADH-UBIQUINONE OXIDOREDUCTASE 1, MITOCHONDRIAL-RELATED"/>
    <property type="match status" value="1"/>
</dbReference>
<dbReference type="PANTHER" id="PTHR43706">
    <property type="entry name" value="NADH DEHYDROGENASE"/>
    <property type="match status" value="1"/>
</dbReference>
<dbReference type="Pfam" id="PF22366">
    <property type="entry name" value="NDH2_C"/>
    <property type="match status" value="1"/>
</dbReference>
<dbReference type="Pfam" id="PF07992">
    <property type="entry name" value="Pyr_redox_2"/>
    <property type="match status" value="1"/>
</dbReference>
<dbReference type="PRINTS" id="PR00368">
    <property type="entry name" value="FADPNR"/>
</dbReference>
<dbReference type="SMART" id="SM00054">
    <property type="entry name" value="EFh"/>
    <property type="match status" value="1"/>
</dbReference>
<dbReference type="SUPFAM" id="SSF47473">
    <property type="entry name" value="EF-hand"/>
    <property type="match status" value="1"/>
</dbReference>
<dbReference type="SUPFAM" id="SSF51905">
    <property type="entry name" value="FAD/NAD(P)-binding domain"/>
    <property type="match status" value="2"/>
</dbReference>
<dbReference type="PROSITE" id="PS50222">
    <property type="entry name" value="EF_HAND_2"/>
    <property type="match status" value="1"/>
</dbReference>
<gene>
    <name type="primary">NDB3</name>
    <name type="ordered locus">At4g21490</name>
    <name type="ORF">F18E5.110</name>
</gene>
<comment type="function">
    <text evidence="1">Alternative NADH-ubiquinone oxidoreductase which catalyzes the oxidation of mitochondrial NADH does not translocate protons across the inner mitochondrial membrane.</text>
</comment>
<comment type="catalytic activity">
    <reaction>
        <text>a quinone + NADH + H(+) = a quinol + NAD(+)</text>
        <dbReference type="Rhea" id="RHEA:46160"/>
        <dbReference type="ChEBI" id="CHEBI:15378"/>
        <dbReference type="ChEBI" id="CHEBI:24646"/>
        <dbReference type="ChEBI" id="CHEBI:57540"/>
        <dbReference type="ChEBI" id="CHEBI:57945"/>
        <dbReference type="ChEBI" id="CHEBI:132124"/>
        <dbReference type="EC" id="1.6.5.9"/>
    </reaction>
</comment>
<comment type="catalytic activity">
    <reaction>
        <text>a ubiquinone + NADH + H(+) = a ubiquinol + NAD(+)</text>
        <dbReference type="Rhea" id="RHEA:23152"/>
        <dbReference type="Rhea" id="RHEA-COMP:9565"/>
        <dbReference type="Rhea" id="RHEA-COMP:9566"/>
        <dbReference type="ChEBI" id="CHEBI:15378"/>
        <dbReference type="ChEBI" id="CHEBI:16389"/>
        <dbReference type="ChEBI" id="CHEBI:17976"/>
        <dbReference type="ChEBI" id="CHEBI:57540"/>
        <dbReference type="ChEBI" id="CHEBI:57945"/>
    </reaction>
</comment>
<comment type="cofactor">
    <cofactor evidence="1">
        <name>FAD</name>
        <dbReference type="ChEBI" id="CHEBI:57692"/>
    </cofactor>
    <text evidence="1">Binds 1 FAD per subunit.</text>
</comment>
<comment type="subcellular location">
    <subcellularLocation>
        <location evidence="1">Mitochondrion inner membrane</location>
        <topology evidence="1">Peripheral membrane protein</topology>
        <orientation evidence="1">Intermembrane side</orientation>
    </subcellularLocation>
    <subcellularLocation>
        <location evidence="8 9">Peroxisome</location>
    </subcellularLocation>
</comment>
<comment type="tissue specificity">
    <text evidence="4 5 6">Expressed at low levels in seedlings, roots, stems, buds and flowers and, to a lower extent, in leaves and cotyledons.</text>
</comment>
<comment type="similarity">
    <text evidence="7">Belongs to the NADH dehydrogenase family.</text>
</comment>
<comment type="sequence caution" evidence="7">
    <conflict type="erroneous gene model prediction">
        <sequence resource="EMBL-CDS" id="CAA18713"/>
    </conflict>
</comment>
<comment type="sequence caution" evidence="7">
    <conflict type="erroneous gene model prediction">
        <sequence resource="EMBL-CDS" id="CAB81256"/>
    </conflict>
</comment>
<evidence type="ECO:0000250" key="1"/>
<evidence type="ECO:0000255" key="2"/>
<evidence type="ECO:0000255" key="3">
    <source>
        <dbReference type="PROSITE-ProRule" id="PRU00448"/>
    </source>
</evidence>
<evidence type="ECO:0000269" key="4">
    <source>
    </source>
</evidence>
<evidence type="ECO:0000269" key="5">
    <source>
    </source>
</evidence>
<evidence type="ECO:0000269" key="6">
    <source>
    </source>
</evidence>
<evidence type="ECO:0000305" key="7"/>
<evidence type="ECO:0000305" key="8">
    <source>
    </source>
</evidence>
<evidence type="ECO:0000305" key="9">
    <source>
    </source>
</evidence>
<sequence length="580" mass="65164">MRPFAYFERLSQAFHDYPSLSKILVVSTISGGGLIVYSEANPSYSNNGVETKTRKRKVVLLGTGWAGASFLKTLNNSSYEVQVISPRNYFAFTPLLPSVTCGTVEARSVVEPIRNIARKQNVEMSFLEAECFKIDPGSKKVYCRSKQGVNSKGKKEFDVDYDYLVIATGAQSNTFNIPGVEENCHFLKEVEDAQRIRSTVIDSFEKASLPGLNEQERKRMLHFVVVGGGPTGVEFASELHDFVNEDLVKLYPKAKNLVQITLLEAADHILTMFDKRITEFAEEKFTRDGIDVKLGSMVVKVNDKEISAKTKAGEVSTIPYGMIVWSTGIGTRPVIKDFMKQIGQGNRRALATDEWLRVEGCDNIYALGDCATINQRKVMEDIAAIFKKADKENSGTLTMKEFHEVMSDICDRYPQVELYLKSKGMHGITDLLKQAQAENGSNKSVELDIEELKSALCQVDSQVKLLPATGQVAAQQGTYLAKCFDRMEVCEKNPEGPIRIRGEGRHRFRPFRYRHLGQFAPLGGEQTAAQLPGDWVSIGHSSQWLWYSVYASKQVSWRTRVLVVSDWMRRFIFGRDSSRI</sequence>
<protein>
    <recommendedName>
        <fullName>External alternative NAD(P)H-ubiquinone oxidoreductase B3, mitochondrial</fullName>
        <ecNumber>1.6.5.9</ecNumber>
    </recommendedName>
    <alternativeName>
        <fullName>External alternative NADH dehydrogenase NDB3</fullName>
    </alternativeName>
    <alternativeName>
        <fullName>NADH:ubiquinone reductase (non-electrogenic) NDB3</fullName>
    </alternativeName>
</protein>
<reference key="1">
    <citation type="journal article" date="1999" name="Nature">
        <title>Sequence and analysis of chromosome 4 of the plant Arabidopsis thaliana.</title>
        <authorList>
            <person name="Mayer K.F.X."/>
            <person name="Schueller C."/>
            <person name="Wambutt R."/>
            <person name="Murphy G."/>
            <person name="Volckaert G."/>
            <person name="Pohl T."/>
            <person name="Duesterhoeft A."/>
            <person name="Stiekema W."/>
            <person name="Entian K.-D."/>
            <person name="Terryn N."/>
            <person name="Harris B."/>
            <person name="Ansorge W."/>
            <person name="Brandt P."/>
            <person name="Grivell L.A."/>
            <person name="Rieger M."/>
            <person name="Weichselgartner M."/>
            <person name="de Simone V."/>
            <person name="Obermaier B."/>
            <person name="Mache R."/>
            <person name="Mueller M."/>
            <person name="Kreis M."/>
            <person name="Delseny M."/>
            <person name="Puigdomenech P."/>
            <person name="Watson M."/>
            <person name="Schmidtheini T."/>
            <person name="Reichert B."/>
            <person name="Portetelle D."/>
            <person name="Perez-Alonso M."/>
            <person name="Boutry M."/>
            <person name="Bancroft I."/>
            <person name="Vos P."/>
            <person name="Hoheisel J."/>
            <person name="Zimmermann W."/>
            <person name="Wedler H."/>
            <person name="Ridley P."/>
            <person name="Langham S.-A."/>
            <person name="McCullagh B."/>
            <person name="Bilham L."/>
            <person name="Robben J."/>
            <person name="van der Schueren J."/>
            <person name="Grymonprez B."/>
            <person name="Chuang Y.-J."/>
            <person name="Vandenbussche F."/>
            <person name="Braeken M."/>
            <person name="Weltjens I."/>
            <person name="Voet M."/>
            <person name="Bastiaens I."/>
            <person name="Aert R."/>
            <person name="Defoor E."/>
            <person name="Weitzenegger T."/>
            <person name="Bothe G."/>
            <person name="Ramsperger U."/>
            <person name="Hilbert H."/>
            <person name="Braun M."/>
            <person name="Holzer E."/>
            <person name="Brandt A."/>
            <person name="Peters S."/>
            <person name="van Staveren M."/>
            <person name="Dirkse W."/>
            <person name="Mooijman P."/>
            <person name="Klein Lankhorst R."/>
            <person name="Rose M."/>
            <person name="Hauf J."/>
            <person name="Koetter P."/>
            <person name="Berneiser S."/>
            <person name="Hempel S."/>
            <person name="Feldpausch M."/>
            <person name="Lamberth S."/>
            <person name="Van den Daele H."/>
            <person name="De Keyser A."/>
            <person name="Buysshaert C."/>
            <person name="Gielen J."/>
            <person name="Villarroel R."/>
            <person name="De Clercq R."/>
            <person name="van Montagu M."/>
            <person name="Rogers J."/>
            <person name="Cronin A."/>
            <person name="Quail M.A."/>
            <person name="Bray-Allen S."/>
            <person name="Clark L."/>
            <person name="Doggett J."/>
            <person name="Hall S."/>
            <person name="Kay M."/>
            <person name="Lennard N."/>
            <person name="McLay K."/>
            <person name="Mayes R."/>
            <person name="Pettett A."/>
            <person name="Rajandream M.A."/>
            <person name="Lyne M."/>
            <person name="Benes V."/>
            <person name="Rechmann S."/>
            <person name="Borkova D."/>
            <person name="Bloecker H."/>
            <person name="Scharfe M."/>
            <person name="Grimm M."/>
            <person name="Loehnert T.-H."/>
            <person name="Dose S."/>
            <person name="de Haan M."/>
            <person name="Maarse A.C."/>
            <person name="Schaefer M."/>
            <person name="Mueller-Auer S."/>
            <person name="Gabel C."/>
            <person name="Fuchs M."/>
            <person name="Fartmann B."/>
            <person name="Granderath K."/>
            <person name="Dauner D."/>
            <person name="Herzl A."/>
            <person name="Neumann S."/>
            <person name="Argiriou A."/>
            <person name="Vitale D."/>
            <person name="Liguori R."/>
            <person name="Piravandi E."/>
            <person name="Massenet O."/>
            <person name="Quigley F."/>
            <person name="Clabauld G."/>
            <person name="Muendlein A."/>
            <person name="Felber R."/>
            <person name="Schnabl S."/>
            <person name="Hiller R."/>
            <person name="Schmidt W."/>
            <person name="Lecharny A."/>
            <person name="Aubourg S."/>
            <person name="Chefdor F."/>
            <person name="Cooke R."/>
            <person name="Berger C."/>
            <person name="Monfort A."/>
            <person name="Casacuberta E."/>
            <person name="Gibbons T."/>
            <person name="Weber N."/>
            <person name="Vandenbol M."/>
            <person name="Bargues M."/>
            <person name="Terol J."/>
            <person name="Torres A."/>
            <person name="Perez-Perez A."/>
            <person name="Purnelle B."/>
            <person name="Bent E."/>
            <person name="Johnson S."/>
            <person name="Tacon D."/>
            <person name="Jesse T."/>
            <person name="Heijnen L."/>
            <person name="Schwarz S."/>
            <person name="Scholler P."/>
            <person name="Heber S."/>
            <person name="Francs P."/>
            <person name="Bielke C."/>
            <person name="Frishman D."/>
            <person name="Haase D."/>
            <person name="Lemcke K."/>
            <person name="Mewes H.-W."/>
            <person name="Stocker S."/>
            <person name="Zaccaria P."/>
            <person name="Bevan M."/>
            <person name="Wilson R.K."/>
            <person name="de la Bastide M."/>
            <person name="Habermann K."/>
            <person name="Parnell L."/>
            <person name="Dedhia N."/>
            <person name="Gnoj L."/>
            <person name="Schutz K."/>
            <person name="Huang E."/>
            <person name="Spiegel L."/>
            <person name="Sekhon M."/>
            <person name="Murray J."/>
            <person name="Sheet P."/>
            <person name="Cordes M."/>
            <person name="Abu-Threideh J."/>
            <person name="Stoneking T."/>
            <person name="Kalicki J."/>
            <person name="Graves T."/>
            <person name="Harmon G."/>
            <person name="Edwards J."/>
            <person name="Latreille P."/>
            <person name="Courtney L."/>
            <person name="Cloud J."/>
            <person name="Abbott A."/>
            <person name="Scott K."/>
            <person name="Johnson D."/>
            <person name="Minx P."/>
            <person name="Bentley D."/>
            <person name="Fulton B."/>
            <person name="Miller N."/>
            <person name="Greco T."/>
            <person name="Kemp K."/>
            <person name="Kramer J."/>
            <person name="Fulton L."/>
            <person name="Mardis E."/>
            <person name="Dante M."/>
            <person name="Pepin K."/>
            <person name="Hillier L.W."/>
            <person name="Nelson J."/>
            <person name="Spieth J."/>
            <person name="Ryan E."/>
            <person name="Andrews S."/>
            <person name="Geisel C."/>
            <person name="Layman D."/>
            <person name="Du H."/>
            <person name="Ali J."/>
            <person name="Berghoff A."/>
            <person name="Jones K."/>
            <person name="Drone K."/>
            <person name="Cotton M."/>
            <person name="Joshu C."/>
            <person name="Antonoiu B."/>
            <person name="Zidanic M."/>
            <person name="Strong C."/>
            <person name="Sun H."/>
            <person name="Lamar B."/>
            <person name="Yordan C."/>
            <person name="Ma P."/>
            <person name="Zhong J."/>
            <person name="Preston R."/>
            <person name="Vil D."/>
            <person name="Shekher M."/>
            <person name="Matero A."/>
            <person name="Shah R."/>
            <person name="Swaby I.K."/>
            <person name="O'Shaughnessy A."/>
            <person name="Rodriguez M."/>
            <person name="Hoffman J."/>
            <person name="Till S."/>
            <person name="Granat S."/>
            <person name="Shohdy N."/>
            <person name="Hasegawa A."/>
            <person name="Hameed A."/>
            <person name="Lodhi M."/>
            <person name="Johnson A."/>
            <person name="Chen E."/>
            <person name="Marra M.A."/>
            <person name="Martienssen R."/>
            <person name="McCombie W.R."/>
        </authorList>
    </citation>
    <scope>NUCLEOTIDE SEQUENCE [LARGE SCALE GENOMIC DNA]</scope>
    <source>
        <strain>cv. Columbia</strain>
    </source>
</reference>
<reference key="2">
    <citation type="journal article" date="2017" name="Plant J.">
        <title>Araport11: a complete reannotation of the Arabidopsis thaliana reference genome.</title>
        <authorList>
            <person name="Cheng C.Y."/>
            <person name="Krishnakumar V."/>
            <person name="Chan A.P."/>
            <person name="Thibaud-Nissen F."/>
            <person name="Schobel S."/>
            <person name="Town C.D."/>
        </authorList>
    </citation>
    <scope>GENOME REANNOTATION</scope>
    <source>
        <strain>cv. Columbia</strain>
    </source>
</reference>
<reference key="3">
    <citation type="journal article" date="2003" name="Plant Cell Physiol.">
        <title>Functional differentiation of peroxisomes revealed by expression profiles of peroxisomal genes in Arabidopsis thaliana.</title>
        <authorList>
            <person name="Kamada T."/>
            <person name="Nito K."/>
            <person name="Hayashi H."/>
            <person name="Mano S."/>
            <person name="Hayashi M."/>
            <person name="Nishimura M."/>
        </authorList>
    </citation>
    <scope>SUBCELLULAR LOCATION</scope>
    <scope>TISSUE SPECIFICITY</scope>
</reference>
<reference key="4">
    <citation type="journal article" date="2003" name="Plant Physiol.">
        <title>Arabidopsis genes encoding mitochondrial type II NAD(P)H dehydrogenases have different evolutionary origin and show distinct responses to light.</title>
        <authorList>
            <person name="Michalecka A.M."/>
            <person name="Svensson A.S."/>
            <person name="Johansson F.I."/>
            <person name="Agius S.C."/>
            <person name="Johanson U."/>
            <person name="Brennicke A."/>
            <person name="Binder S."/>
            <person name="Rasmusson A.G."/>
        </authorList>
    </citation>
    <scope>SUBCELLULAR LOCATION</scope>
    <scope>TISSUE SPECIFICITY</scope>
</reference>
<reference key="5">
    <citation type="journal article" date="2004" name="Annu. Rev. Plant Biol.">
        <title>Alternative NAD(P)H dehydrogenases of plant mitochondria.</title>
        <authorList>
            <person name="Rasmusson A.G."/>
            <person name="Soole K.L."/>
            <person name="Elthon T.E."/>
        </authorList>
    </citation>
    <scope>REVIEW</scope>
</reference>
<reference key="6">
    <citation type="journal article" date="2006" name="Plant Cell Physiol.">
        <title>Characterization of mitochondrial alternative NAD(P)H dehydrogenases in Arabidopsis: intraorganelle location and expression.</title>
        <authorList>
            <person name="Elhafez D."/>
            <person name="Murcha M.W."/>
            <person name="Clifton R."/>
            <person name="Soole K.L."/>
            <person name="Day D.A."/>
            <person name="Whelan J."/>
        </authorList>
    </citation>
    <scope>TISSUE SPECIFICITY</scope>
    <source>
        <strain>cv. Columbia</strain>
    </source>
</reference>